<dbReference type="EC" id="2.7.7.23" evidence="1"/>
<dbReference type="EC" id="2.3.1.157" evidence="1"/>
<dbReference type="EMBL" id="CU928164">
    <property type="protein sequence ID" value="CAR20440.1"/>
    <property type="molecule type" value="Genomic_DNA"/>
</dbReference>
<dbReference type="RefSeq" id="WP_000933724.1">
    <property type="nucleotide sequence ID" value="NC_011750.1"/>
</dbReference>
<dbReference type="RefSeq" id="YP_002410209.1">
    <property type="nucleotide sequence ID" value="NC_011750.1"/>
</dbReference>
<dbReference type="SMR" id="B7NR32"/>
<dbReference type="STRING" id="585057.ECIAI39_4334"/>
<dbReference type="KEGG" id="ect:ECIAI39_4334"/>
<dbReference type="PATRIC" id="fig|585057.6.peg.4479"/>
<dbReference type="HOGENOM" id="CLU_029499_15_2_6"/>
<dbReference type="UniPathway" id="UPA00113">
    <property type="reaction ID" value="UER00532"/>
</dbReference>
<dbReference type="UniPathway" id="UPA00113">
    <property type="reaction ID" value="UER00533"/>
</dbReference>
<dbReference type="UniPathway" id="UPA00973"/>
<dbReference type="Proteomes" id="UP000000749">
    <property type="component" value="Chromosome"/>
</dbReference>
<dbReference type="GO" id="GO:0005737">
    <property type="term" value="C:cytoplasm"/>
    <property type="evidence" value="ECO:0007669"/>
    <property type="project" value="UniProtKB-SubCell"/>
</dbReference>
<dbReference type="GO" id="GO:0016020">
    <property type="term" value="C:membrane"/>
    <property type="evidence" value="ECO:0007669"/>
    <property type="project" value="GOC"/>
</dbReference>
<dbReference type="GO" id="GO:0019134">
    <property type="term" value="F:glucosamine-1-phosphate N-acetyltransferase activity"/>
    <property type="evidence" value="ECO:0007669"/>
    <property type="project" value="UniProtKB-UniRule"/>
</dbReference>
<dbReference type="GO" id="GO:0000287">
    <property type="term" value="F:magnesium ion binding"/>
    <property type="evidence" value="ECO:0007669"/>
    <property type="project" value="UniProtKB-UniRule"/>
</dbReference>
<dbReference type="GO" id="GO:0003977">
    <property type="term" value="F:UDP-N-acetylglucosamine diphosphorylase activity"/>
    <property type="evidence" value="ECO:0007669"/>
    <property type="project" value="UniProtKB-UniRule"/>
</dbReference>
<dbReference type="GO" id="GO:0000902">
    <property type="term" value="P:cell morphogenesis"/>
    <property type="evidence" value="ECO:0007669"/>
    <property type="project" value="UniProtKB-UniRule"/>
</dbReference>
<dbReference type="GO" id="GO:0071555">
    <property type="term" value="P:cell wall organization"/>
    <property type="evidence" value="ECO:0007669"/>
    <property type="project" value="UniProtKB-KW"/>
</dbReference>
<dbReference type="GO" id="GO:0009245">
    <property type="term" value="P:lipid A biosynthetic process"/>
    <property type="evidence" value="ECO:0007669"/>
    <property type="project" value="UniProtKB-UniRule"/>
</dbReference>
<dbReference type="GO" id="GO:0009252">
    <property type="term" value="P:peptidoglycan biosynthetic process"/>
    <property type="evidence" value="ECO:0007669"/>
    <property type="project" value="UniProtKB-UniRule"/>
</dbReference>
<dbReference type="GO" id="GO:0008360">
    <property type="term" value="P:regulation of cell shape"/>
    <property type="evidence" value="ECO:0007669"/>
    <property type="project" value="UniProtKB-KW"/>
</dbReference>
<dbReference type="GO" id="GO:0006048">
    <property type="term" value="P:UDP-N-acetylglucosamine biosynthetic process"/>
    <property type="evidence" value="ECO:0007669"/>
    <property type="project" value="UniProtKB-UniPathway"/>
</dbReference>
<dbReference type="CDD" id="cd02540">
    <property type="entry name" value="GT2_GlmU_N_bac"/>
    <property type="match status" value="1"/>
</dbReference>
<dbReference type="CDD" id="cd03353">
    <property type="entry name" value="LbH_GlmU_C"/>
    <property type="match status" value="1"/>
</dbReference>
<dbReference type="FunFam" id="2.160.10.10:FF:000011">
    <property type="entry name" value="Bifunctional protein GlmU"/>
    <property type="match status" value="1"/>
</dbReference>
<dbReference type="FunFam" id="3.90.550.10:FF:000006">
    <property type="entry name" value="Bifunctional protein GlmU"/>
    <property type="match status" value="1"/>
</dbReference>
<dbReference type="Gene3D" id="2.160.10.10">
    <property type="entry name" value="Hexapeptide repeat proteins"/>
    <property type="match status" value="1"/>
</dbReference>
<dbReference type="Gene3D" id="3.90.550.10">
    <property type="entry name" value="Spore Coat Polysaccharide Biosynthesis Protein SpsA, Chain A"/>
    <property type="match status" value="1"/>
</dbReference>
<dbReference type="HAMAP" id="MF_01631">
    <property type="entry name" value="GlmU"/>
    <property type="match status" value="1"/>
</dbReference>
<dbReference type="InterPro" id="IPR005882">
    <property type="entry name" value="Bifunctional_GlmU"/>
</dbReference>
<dbReference type="InterPro" id="IPR050065">
    <property type="entry name" value="GlmU-like"/>
</dbReference>
<dbReference type="InterPro" id="IPR038009">
    <property type="entry name" value="GlmU_C_LbH"/>
</dbReference>
<dbReference type="InterPro" id="IPR001451">
    <property type="entry name" value="Hexapep"/>
</dbReference>
<dbReference type="InterPro" id="IPR018357">
    <property type="entry name" value="Hexapep_transf_CS"/>
</dbReference>
<dbReference type="InterPro" id="IPR025877">
    <property type="entry name" value="MobA-like_NTP_Trfase"/>
</dbReference>
<dbReference type="InterPro" id="IPR029044">
    <property type="entry name" value="Nucleotide-diphossugar_trans"/>
</dbReference>
<dbReference type="InterPro" id="IPR011004">
    <property type="entry name" value="Trimer_LpxA-like_sf"/>
</dbReference>
<dbReference type="NCBIfam" id="TIGR01173">
    <property type="entry name" value="glmU"/>
    <property type="match status" value="1"/>
</dbReference>
<dbReference type="NCBIfam" id="NF006986">
    <property type="entry name" value="PRK09451.1"/>
    <property type="match status" value="1"/>
</dbReference>
<dbReference type="PANTHER" id="PTHR43584:SF3">
    <property type="entry name" value="BIFUNCTIONAL PROTEIN GLMU"/>
    <property type="match status" value="1"/>
</dbReference>
<dbReference type="PANTHER" id="PTHR43584">
    <property type="entry name" value="NUCLEOTIDYL TRANSFERASE"/>
    <property type="match status" value="1"/>
</dbReference>
<dbReference type="Pfam" id="PF00132">
    <property type="entry name" value="Hexapep"/>
    <property type="match status" value="1"/>
</dbReference>
<dbReference type="Pfam" id="PF12804">
    <property type="entry name" value="NTP_transf_3"/>
    <property type="match status" value="1"/>
</dbReference>
<dbReference type="SUPFAM" id="SSF53448">
    <property type="entry name" value="Nucleotide-diphospho-sugar transferases"/>
    <property type="match status" value="1"/>
</dbReference>
<dbReference type="SUPFAM" id="SSF51161">
    <property type="entry name" value="Trimeric LpxA-like enzymes"/>
    <property type="match status" value="1"/>
</dbReference>
<dbReference type="PROSITE" id="PS00101">
    <property type="entry name" value="HEXAPEP_TRANSFERASES"/>
    <property type="match status" value="1"/>
</dbReference>
<name>GLMU_ECO7I</name>
<proteinExistence type="inferred from homology"/>
<reference key="1">
    <citation type="journal article" date="2009" name="PLoS Genet.">
        <title>Organised genome dynamics in the Escherichia coli species results in highly diverse adaptive paths.</title>
        <authorList>
            <person name="Touchon M."/>
            <person name="Hoede C."/>
            <person name="Tenaillon O."/>
            <person name="Barbe V."/>
            <person name="Baeriswyl S."/>
            <person name="Bidet P."/>
            <person name="Bingen E."/>
            <person name="Bonacorsi S."/>
            <person name="Bouchier C."/>
            <person name="Bouvet O."/>
            <person name="Calteau A."/>
            <person name="Chiapello H."/>
            <person name="Clermont O."/>
            <person name="Cruveiller S."/>
            <person name="Danchin A."/>
            <person name="Diard M."/>
            <person name="Dossat C."/>
            <person name="Karoui M.E."/>
            <person name="Frapy E."/>
            <person name="Garry L."/>
            <person name="Ghigo J.M."/>
            <person name="Gilles A.M."/>
            <person name="Johnson J."/>
            <person name="Le Bouguenec C."/>
            <person name="Lescat M."/>
            <person name="Mangenot S."/>
            <person name="Martinez-Jehanne V."/>
            <person name="Matic I."/>
            <person name="Nassif X."/>
            <person name="Oztas S."/>
            <person name="Petit M.A."/>
            <person name="Pichon C."/>
            <person name="Rouy Z."/>
            <person name="Ruf C.S."/>
            <person name="Schneider D."/>
            <person name="Tourret J."/>
            <person name="Vacherie B."/>
            <person name="Vallenet D."/>
            <person name="Medigue C."/>
            <person name="Rocha E.P.C."/>
            <person name="Denamur E."/>
        </authorList>
    </citation>
    <scope>NUCLEOTIDE SEQUENCE [LARGE SCALE GENOMIC DNA]</scope>
    <source>
        <strain>IAI39 / ExPEC</strain>
    </source>
</reference>
<organism>
    <name type="scientific">Escherichia coli O7:K1 (strain IAI39 / ExPEC)</name>
    <dbReference type="NCBI Taxonomy" id="585057"/>
    <lineage>
        <taxon>Bacteria</taxon>
        <taxon>Pseudomonadati</taxon>
        <taxon>Pseudomonadota</taxon>
        <taxon>Gammaproteobacteria</taxon>
        <taxon>Enterobacterales</taxon>
        <taxon>Enterobacteriaceae</taxon>
        <taxon>Escherichia</taxon>
    </lineage>
</organism>
<protein>
    <recommendedName>
        <fullName evidence="1">Bifunctional protein GlmU</fullName>
    </recommendedName>
    <domain>
        <recommendedName>
            <fullName evidence="1">UDP-N-acetylglucosamine pyrophosphorylase</fullName>
            <ecNumber evidence="1">2.7.7.23</ecNumber>
        </recommendedName>
        <alternativeName>
            <fullName evidence="1">N-acetylglucosamine-1-phosphate uridyltransferase</fullName>
        </alternativeName>
    </domain>
    <domain>
        <recommendedName>
            <fullName evidence="1">Glucosamine-1-phosphate N-acetyltransferase</fullName>
            <ecNumber evidence="1">2.3.1.157</ecNumber>
        </recommendedName>
    </domain>
</protein>
<accession>B7NR32</accession>
<sequence length="456" mass="49222">MLNNAMSVVILAAGKGTRMYSDLPKVLHTLAGKAMVQHVIDAANELGAAHVHLVYGHGGDLLKQALKDDNLNWVLQAEQLGTGHAMQQAAPFFADDEDILMLYGDVPLISVETLQRLRDAKPQGGIGLLTVKLDDPTGYGRITRENGKVTGIVEHKDATDEQRQIQEINTGILIANGADMKRWLAKLTNNNAQGEYYITDIIALAYQEGREIVAVHPQRLSEVEGVNNRLQLSRLERVYQFEQAEKLLLAGVMLRDPARFDLRGTLTHGRDVEIDTNVIIEGNVTLGHRVKIGTGCVIKNSVIGDDCEISPYTVVEDANLAAACTIGPFARLRPGAELLEGAHVGNFVEMKKARLGKGSKAGHLTYLGDAEVGDNVNIGAGTITCNYDGANKFKTIIGDDVFVGSDTQLVAPVTVGKGATIAAGTTVTRNVGENALAISRVPQSQKEGWRRPVKKK</sequence>
<feature type="chain" id="PRO_1000186445" description="Bifunctional protein GlmU">
    <location>
        <begin position="1"/>
        <end position="456"/>
    </location>
</feature>
<feature type="region of interest" description="Pyrophosphorylase" evidence="1">
    <location>
        <begin position="1"/>
        <end position="229"/>
    </location>
</feature>
<feature type="region of interest" description="Linker" evidence="1">
    <location>
        <begin position="230"/>
        <end position="250"/>
    </location>
</feature>
<feature type="region of interest" description="N-acetyltransferase" evidence="1">
    <location>
        <begin position="251"/>
        <end position="456"/>
    </location>
</feature>
<feature type="active site" description="Proton acceptor" evidence="1">
    <location>
        <position position="363"/>
    </location>
</feature>
<feature type="binding site" evidence="1">
    <location>
        <begin position="11"/>
        <end position="14"/>
    </location>
    <ligand>
        <name>UDP-N-acetyl-alpha-D-glucosamine</name>
        <dbReference type="ChEBI" id="CHEBI:57705"/>
    </ligand>
</feature>
<feature type="binding site" evidence="1">
    <location>
        <position position="25"/>
    </location>
    <ligand>
        <name>UDP-N-acetyl-alpha-D-glucosamine</name>
        <dbReference type="ChEBI" id="CHEBI:57705"/>
    </ligand>
</feature>
<feature type="binding site" evidence="1">
    <location>
        <position position="76"/>
    </location>
    <ligand>
        <name>UDP-N-acetyl-alpha-D-glucosamine</name>
        <dbReference type="ChEBI" id="CHEBI:57705"/>
    </ligand>
</feature>
<feature type="binding site" evidence="1">
    <location>
        <begin position="81"/>
        <end position="82"/>
    </location>
    <ligand>
        <name>UDP-N-acetyl-alpha-D-glucosamine</name>
        <dbReference type="ChEBI" id="CHEBI:57705"/>
    </ligand>
</feature>
<feature type="binding site" evidence="1">
    <location>
        <begin position="103"/>
        <end position="105"/>
    </location>
    <ligand>
        <name>UDP-N-acetyl-alpha-D-glucosamine</name>
        <dbReference type="ChEBI" id="CHEBI:57705"/>
    </ligand>
</feature>
<feature type="binding site" evidence="1">
    <location>
        <position position="105"/>
    </location>
    <ligand>
        <name>Mg(2+)</name>
        <dbReference type="ChEBI" id="CHEBI:18420"/>
    </ligand>
</feature>
<feature type="binding site" evidence="1">
    <location>
        <position position="140"/>
    </location>
    <ligand>
        <name>UDP-N-acetyl-alpha-D-glucosamine</name>
        <dbReference type="ChEBI" id="CHEBI:57705"/>
    </ligand>
</feature>
<feature type="binding site" evidence="1">
    <location>
        <position position="154"/>
    </location>
    <ligand>
        <name>UDP-N-acetyl-alpha-D-glucosamine</name>
        <dbReference type="ChEBI" id="CHEBI:57705"/>
    </ligand>
</feature>
<feature type="binding site" evidence="1">
    <location>
        <position position="169"/>
    </location>
    <ligand>
        <name>UDP-N-acetyl-alpha-D-glucosamine</name>
        <dbReference type="ChEBI" id="CHEBI:57705"/>
    </ligand>
</feature>
<feature type="binding site" evidence="1">
    <location>
        <position position="227"/>
    </location>
    <ligand>
        <name>Mg(2+)</name>
        <dbReference type="ChEBI" id="CHEBI:18420"/>
    </ligand>
</feature>
<feature type="binding site" evidence="1">
    <location>
        <position position="227"/>
    </location>
    <ligand>
        <name>UDP-N-acetyl-alpha-D-glucosamine</name>
        <dbReference type="ChEBI" id="CHEBI:57705"/>
    </ligand>
</feature>
<feature type="binding site" evidence="1">
    <location>
        <position position="333"/>
    </location>
    <ligand>
        <name>UDP-N-acetyl-alpha-D-glucosamine</name>
        <dbReference type="ChEBI" id="CHEBI:57705"/>
    </ligand>
</feature>
<feature type="binding site" evidence="1">
    <location>
        <position position="351"/>
    </location>
    <ligand>
        <name>UDP-N-acetyl-alpha-D-glucosamine</name>
        <dbReference type="ChEBI" id="CHEBI:57705"/>
    </ligand>
</feature>
<feature type="binding site" evidence="1">
    <location>
        <position position="366"/>
    </location>
    <ligand>
        <name>UDP-N-acetyl-alpha-D-glucosamine</name>
        <dbReference type="ChEBI" id="CHEBI:57705"/>
    </ligand>
</feature>
<feature type="binding site" evidence="1">
    <location>
        <position position="377"/>
    </location>
    <ligand>
        <name>UDP-N-acetyl-alpha-D-glucosamine</name>
        <dbReference type="ChEBI" id="CHEBI:57705"/>
    </ligand>
</feature>
<feature type="binding site" evidence="1">
    <location>
        <position position="380"/>
    </location>
    <ligand>
        <name>acetyl-CoA</name>
        <dbReference type="ChEBI" id="CHEBI:57288"/>
    </ligand>
</feature>
<feature type="binding site" evidence="1">
    <location>
        <begin position="386"/>
        <end position="387"/>
    </location>
    <ligand>
        <name>acetyl-CoA</name>
        <dbReference type="ChEBI" id="CHEBI:57288"/>
    </ligand>
</feature>
<feature type="binding site" evidence="1">
    <location>
        <position position="405"/>
    </location>
    <ligand>
        <name>acetyl-CoA</name>
        <dbReference type="ChEBI" id="CHEBI:57288"/>
    </ligand>
</feature>
<feature type="binding site" evidence="1">
    <location>
        <position position="423"/>
    </location>
    <ligand>
        <name>acetyl-CoA</name>
        <dbReference type="ChEBI" id="CHEBI:57288"/>
    </ligand>
</feature>
<feature type="binding site" evidence="1">
    <location>
        <position position="440"/>
    </location>
    <ligand>
        <name>acetyl-CoA</name>
        <dbReference type="ChEBI" id="CHEBI:57288"/>
    </ligand>
</feature>
<evidence type="ECO:0000255" key="1">
    <source>
        <dbReference type="HAMAP-Rule" id="MF_01631"/>
    </source>
</evidence>
<keyword id="KW-0012">Acyltransferase</keyword>
<keyword id="KW-0133">Cell shape</keyword>
<keyword id="KW-0961">Cell wall biogenesis/degradation</keyword>
<keyword id="KW-0963">Cytoplasm</keyword>
<keyword id="KW-0460">Magnesium</keyword>
<keyword id="KW-0479">Metal-binding</keyword>
<keyword id="KW-0511">Multifunctional enzyme</keyword>
<keyword id="KW-0548">Nucleotidyltransferase</keyword>
<keyword id="KW-0573">Peptidoglycan synthesis</keyword>
<keyword id="KW-0677">Repeat</keyword>
<keyword id="KW-0808">Transferase</keyword>
<gene>
    <name evidence="1" type="primary">glmU</name>
    <name type="ordered locus">ECIAI39_4334</name>
</gene>
<comment type="function">
    <text evidence="1">Catalyzes the last two sequential reactions in the de novo biosynthetic pathway for UDP-N-acetylglucosamine (UDP-GlcNAc). The C-terminal domain catalyzes the transfer of acetyl group from acetyl coenzyme A to glucosamine-1-phosphate (GlcN-1-P) to produce N-acetylglucosamine-1-phosphate (GlcNAc-1-P), which is converted into UDP-GlcNAc by the transfer of uridine 5-monophosphate (from uridine 5-triphosphate), a reaction catalyzed by the N-terminal domain.</text>
</comment>
<comment type="catalytic activity">
    <reaction evidence="1">
        <text>alpha-D-glucosamine 1-phosphate + acetyl-CoA = N-acetyl-alpha-D-glucosamine 1-phosphate + CoA + H(+)</text>
        <dbReference type="Rhea" id="RHEA:13725"/>
        <dbReference type="ChEBI" id="CHEBI:15378"/>
        <dbReference type="ChEBI" id="CHEBI:57287"/>
        <dbReference type="ChEBI" id="CHEBI:57288"/>
        <dbReference type="ChEBI" id="CHEBI:57776"/>
        <dbReference type="ChEBI" id="CHEBI:58516"/>
        <dbReference type="EC" id="2.3.1.157"/>
    </reaction>
</comment>
<comment type="catalytic activity">
    <reaction evidence="1">
        <text>N-acetyl-alpha-D-glucosamine 1-phosphate + UTP + H(+) = UDP-N-acetyl-alpha-D-glucosamine + diphosphate</text>
        <dbReference type="Rhea" id="RHEA:13509"/>
        <dbReference type="ChEBI" id="CHEBI:15378"/>
        <dbReference type="ChEBI" id="CHEBI:33019"/>
        <dbReference type="ChEBI" id="CHEBI:46398"/>
        <dbReference type="ChEBI" id="CHEBI:57705"/>
        <dbReference type="ChEBI" id="CHEBI:57776"/>
        <dbReference type="EC" id="2.7.7.23"/>
    </reaction>
</comment>
<comment type="cofactor">
    <cofactor evidence="1">
        <name>Mg(2+)</name>
        <dbReference type="ChEBI" id="CHEBI:18420"/>
    </cofactor>
    <text evidence="1">Binds 1 Mg(2+) ion per subunit.</text>
</comment>
<comment type="pathway">
    <text evidence="1">Nucleotide-sugar biosynthesis; UDP-N-acetyl-alpha-D-glucosamine biosynthesis; N-acetyl-alpha-D-glucosamine 1-phosphate from alpha-D-glucosamine 6-phosphate (route II): step 2/2.</text>
</comment>
<comment type="pathway">
    <text evidence="1">Nucleotide-sugar biosynthesis; UDP-N-acetyl-alpha-D-glucosamine biosynthesis; UDP-N-acetyl-alpha-D-glucosamine from N-acetyl-alpha-D-glucosamine 1-phosphate: step 1/1.</text>
</comment>
<comment type="pathway">
    <text evidence="1">Bacterial outer membrane biogenesis; LPS lipid A biosynthesis.</text>
</comment>
<comment type="subunit">
    <text evidence="1">Homotrimer.</text>
</comment>
<comment type="subcellular location">
    <subcellularLocation>
        <location evidence="1">Cytoplasm</location>
    </subcellularLocation>
</comment>
<comment type="similarity">
    <text evidence="1">In the N-terminal section; belongs to the N-acetylglucosamine-1-phosphate uridyltransferase family.</text>
</comment>
<comment type="similarity">
    <text evidence="1">In the C-terminal section; belongs to the transferase hexapeptide repeat family.</text>
</comment>